<dbReference type="EC" id="2.1.2.1" evidence="1"/>
<dbReference type="EMBL" id="CP001359">
    <property type="protein sequence ID" value="ACL66265.1"/>
    <property type="molecule type" value="Genomic_DNA"/>
</dbReference>
<dbReference type="RefSeq" id="WP_012634006.1">
    <property type="nucleotide sequence ID" value="NC_011891.1"/>
</dbReference>
<dbReference type="SMR" id="B8JEW9"/>
<dbReference type="KEGG" id="acp:A2cp1_2928"/>
<dbReference type="HOGENOM" id="CLU_022477_2_1_7"/>
<dbReference type="UniPathway" id="UPA00193"/>
<dbReference type="UniPathway" id="UPA00288">
    <property type="reaction ID" value="UER01023"/>
</dbReference>
<dbReference type="Proteomes" id="UP000007089">
    <property type="component" value="Chromosome"/>
</dbReference>
<dbReference type="GO" id="GO:0005829">
    <property type="term" value="C:cytosol"/>
    <property type="evidence" value="ECO:0007669"/>
    <property type="project" value="TreeGrafter"/>
</dbReference>
<dbReference type="GO" id="GO:0004372">
    <property type="term" value="F:glycine hydroxymethyltransferase activity"/>
    <property type="evidence" value="ECO:0007669"/>
    <property type="project" value="UniProtKB-UniRule"/>
</dbReference>
<dbReference type="GO" id="GO:0030170">
    <property type="term" value="F:pyridoxal phosphate binding"/>
    <property type="evidence" value="ECO:0007669"/>
    <property type="project" value="UniProtKB-UniRule"/>
</dbReference>
<dbReference type="GO" id="GO:0019264">
    <property type="term" value="P:glycine biosynthetic process from serine"/>
    <property type="evidence" value="ECO:0007669"/>
    <property type="project" value="UniProtKB-UniRule"/>
</dbReference>
<dbReference type="GO" id="GO:0035999">
    <property type="term" value="P:tetrahydrofolate interconversion"/>
    <property type="evidence" value="ECO:0007669"/>
    <property type="project" value="UniProtKB-UniRule"/>
</dbReference>
<dbReference type="CDD" id="cd00378">
    <property type="entry name" value="SHMT"/>
    <property type="match status" value="1"/>
</dbReference>
<dbReference type="FunFam" id="3.40.640.10:FF:000001">
    <property type="entry name" value="Serine hydroxymethyltransferase"/>
    <property type="match status" value="1"/>
</dbReference>
<dbReference type="FunFam" id="3.90.1150.10:FF:000003">
    <property type="entry name" value="Serine hydroxymethyltransferase"/>
    <property type="match status" value="1"/>
</dbReference>
<dbReference type="Gene3D" id="3.90.1150.10">
    <property type="entry name" value="Aspartate Aminotransferase, domain 1"/>
    <property type="match status" value="1"/>
</dbReference>
<dbReference type="Gene3D" id="3.40.640.10">
    <property type="entry name" value="Type I PLP-dependent aspartate aminotransferase-like (Major domain)"/>
    <property type="match status" value="1"/>
</dbReference>
<dbReference type="HAMAP" id="MF_00051">
    <property type="entry name" value="SHMT"/>
    <property type="match status" value="1"/>
</dbReference>
<dbReference type="InterPro" id="IPR015424">
    <property type="entry name" value="PyrdxlP-dep_Trfase"/>
</dbReference>
<dbReference type="InterPro" id="IPR015421">
    <property type="entry name" value="PyrdxlP-dep_Trfase_major"/>
</dbReference>
<dbReference type="InterPro" id="IPR015422">
    <property type="entry name" value="PyrdxlP-dep_Trfase_small"/>
</dbReference>
<dbReference type="InterPro" id="IPR001085">
    <property type="entry name" value="Ser_HO-MeTrfase"/>
</dbReference>
<dbReference type="InterPro" id="IPR049943">
    <property type="entry name" value="Ser_HO-MeTrfase-like"/>
</dbReference>
<dbReference type="InterPro" id="IPR019798">
    <property type="entry name" value="Ser_HO-MeTrfase_PLP_BS"/>
</dbReference>
<dbReference type="InterPro" id="IPR039429">
    <property type="entry name" value="SHMT-like_dom"/>
</dbReference>
<dbReference type="NCBIfam" id="NF000586">
    <property type="entry name" value="PRK00011.1"/>
    <property type="match status" value="1"/>
</dbReference>
<dbReference type="PANTHER" id="PTHR11680">
    <property type="entry name" value="SERINE HYDROXYMETHYLTRANSFERASE"/>
    <property type="match status" value="1"/>
</dbReference>
<dbReference type="PANTHER" id="PTHR11680:SF50">
    <property type="entry name" value="SERINE HYDROXYMETHYLTRANSFERASE"/>
    <property type="match status" value="1"/>
</dbReference>
<dbReference type="Pfam" id="PF00464">
    <property type="entry name" value="SHMT"/>
    <property type="match status" value="1"/>
</dbReference>
<dbReference type="PIRSF" id="PIRSF000412">
    <property type="entry name" value="SHMT"/>
    <property type="match status" value="1"/>
</dbReference>
<dbReference type="SUPFAM" id="SSF53383">
    <property type="entry name" value="PLP-dependent transferases"/>
    <property type="match status" value="1"/>
</dbReference>
<dbReference type="PROSITE" id="PS00096">
    <property type="entry name" value="SHMT"/>
    <property type="match status" value="1"/>
</dbReference>
<name>GLYA_ANAD2</name>
<protein>
    <recommendedName>
        <fullName evidence="1">Serine hydroxymethyltransferase</fullName>
        <shortName evidence="1">SHMT</shortName>
        <shortName evidence="1">Serine methylase</shortName>
        <ecNumber evidence="1">2.1.2.1</ecNumber>
    </recommendedName>
</protein>
<evidence type="ECO:0000255" key="1">
    <source>
        <dbReference type="HAMAP-Rule" id="MF_00051"/>
    </source>
</evidence>
<organism>
    <name type="scientific">Anaeromyxobacter dehalogenans (strain 2CP-1 / ATCC BAA-258)</name>
    <dbReference type="NCBI Taxonomy" id="455488"/>
    <lineage>
        <taxon>Bacteria</taxon>
        <taxon>Pseudomonadati</taxon>
        <taxon>Myxococcota</taxon>
        <taxon>Myxococcia</taxon>
        <taxon>Myxococcales</taxon>
        <taxon>Cystobacterineae</taxon>
        <taxon>Anaeromyxobacteraceae</taxon>
        <taxon>Anaeromyxobacter</taxon>
    </lineage>
</organism>
<proteinExistence type="inferred from homology"/>
<gene>
    <name evidence="1" type="primary">glyA</name>
    <name type="ordered locus">A2cp1_2928</name>
</gene>
<accession>B8JEW9</accession>
<sequence length="417" mass="44989">MMPTQRLAEADPQIAKLIREETRRQAEGLELIASENFVSPAVLEALGSTLTNKYAEGYPGKRYYGGCEVVDQVEQLAIDRAKQLFGADHANVQPHAGSQANMAAYFALAKPGDTVLAMSLNFGGHLTHGSPVNFSGKLFKIVPYGLRQSDETIDMDEVARLAREHKPRILMVGASAYSRTLHFDRFAEIANEVGAAMVVDMAHIAGLVAAGLHPSPVPHSEIVTTTTHKTLRGPRGGMILCREAHAKTLNSQIFPGIQGGPLEHVIAAKAVAFGEALRPEFKAYQRRIVENAQVLAEGLKSAGLRLVSGGTDNHLMLVDLRPKKLTGKIAEEALGKAGITVNKNMIPWDPEKPMTTSGIRVGTPALTTRGMGSREMTLVAALIGRVLDAPADEQVLARVRGEVKDLCAHFPMYADRV</sequence>
<keyword id="KW-0028">Amino-acid biosynthesis</keyword>
<keyword id="KW-0963">Cytoplasm</keyword>
<keyword id="KW-0554">One-carbon metabolism</keyword>
<keyword id="KW-0663">Pyridoxal phosphate</keyword>
<keyword id="KW-0808">Transferase</keyword>
<reference key="1">
    <citation type="submission" date="2009-01" db="EMBL/GenBank/DDBJ databases">
        <title>Complete sequence of Anaeromyxobacter dehalogenans 2CP-1.</title>
        <authorList>
            <person name="Lucas S."/>
            <person name="Copeland A."/>
            <person name="Lapidus A."/>
            <person name="Glavina del Rio T."/>
            <person name="Dalin E."/>
            <person name="Tice H."/>
            <person name="Bruce D."/>
            <person name="Goodwin L."/>
            <person name="Pitluck S."/>
            <person name="Saunders E."/>
            <person name="Brettin T."/>
            <person name="Detter J.C."/>
            <person name="Han C."/>
            <person name="Larimer F."/>
            <person name="Land M."/>
            <person name="Hauser L."/>
            <person name="Kyrpides N."/>
            <person name="Ovchinnikova G."/>
            <person name="Beliaev A.S."/>
            <person name="Richardson P."/>
        </authorList>
    </citation>
    <scope>NUCLEOTIDE SEQUENCE [LARGE SCALE GENOMIC DNA]</scope>
    <source>
        <strain>2CP-1 / ATCC BAA-258</strain>
    </source>
</reference>
<comment type="function">
    <text evidence="1">Catalyzes the reversible interconversion of serine and glycine with tetrahydrofolate (THF) serving as the one-carbon carrier. This reaction serves as the major source of one-carbon groups required for the biosynthesis of purines, thymidylate, methionine, and other important biomolecules. Also exhibits THF-independent aldolase activity toward beta-hydroxyamino acids, producing glycine and aldehydes, via a retro-aldol mechanism.</text>
</comment>
<comment type="catalytic activity">
    <reaction evidence="1">
        <text>(6R)-5,10-methylene-5,6,7,8-tetrahydrofolate + glycine + H2O = (6S)-5,6,7,8-tetrahydrofolate + L-serine</text>
        <dbReference type="Rhea" id="RHEA:15481"/>
        <dbReference type="ChEBI" id="CHEBI:15377"/>
        <dbReference type="ChEBI" id="CHEBI:15636"/>
        <dbReference type="ChEBI" id="CHEBI:33384"/>
        <dbReference type="ChEBI" id="CHEBI:57305"/>
        <dbReference type="ChEBI" id="CHEBI:57453"/>
        <dbReference type="EC" id="2.1.2.1"/>
    </reaction>
</comment>
<comment type="cofactor">
    <cofactor evidence="1">
        <name>pyridoxal 5'-phosphate</name>
        <dbReference type="ChEBI" id="CHEBI:597326"/>
    </cofactor>
</comment>
<comment type="pathway">
    <text evidence="1">One-carbon metabolism; tetrahydrofolate interconversion.</text>
</comment>
<comment type="pathway">
    <text evidence="1">Amino-acid biosynthesis; glycine biosynthesis; glycine from L-serine: step 1/1.</text>
</comment>
<comment type="subunit">
    <text evidence="1">Homodimer.</text>
</comment>
<comment type="subcellular location">
    <subcellularLocation>
        <location evidence="1">Cytoplasm</location>
    </subcellularLocation>
</comment>
<comment type="similarity">
    <text evidence="1">Belongs to the SHMT family.</text>
</comment>
<feature type="chain" id="PRO_1000195427" description="Serine hydroxymethyltransferase">
    <location>
        <begin position="1"/>
        <end position="417"/>
    </location>
</feature>
<feature type="binding site" evidence="1">
    <location>
        <position position="120"/>
    </location>
    <ligand>
        <name>(6S)-5,6,7,8-tetrahydrofolate</name>
        <dbReference type="ChEBI" id="CHEBI:57453"/>
    </ligand>
</feature>
<feature type="binding site" evidence="1">
    <location>
        <begin position="124"/>
        <end position="126"/>
    </location>
    <ligand>
        <name>(6S)-5,6,7,8-tetrahydrofolate</name>
        <dbReference type="ChEBI" id="CHEBI:57453"/>
    </ligand>
</feature>
<feature type="site" description="Plays an important role in substrate specificity" evidence="1">
    <location>
        <position position="228"/>
    </location>
</feature>
<feature type="modified residue" description="N6-(pyridoxal phosphate)lysine" evidence="1">
    <location>
        <position position="229"/>
    </location>
</feature>